<comment type="function">
    <text evidence="1">Catalyzes the 2-thiolation of uridine at the wobble position (U34) of tRNA(Lys), tRNA(Glu) and tRNA(Gln), leading to the formation of s(2)U34, the first step of tRNA-mnm(5)s(2)U34 synthesis. Sulfur is provided by IscS, via a sulfur-relay system. Binds ATP and its substrate tRNAs.</text>
</comment>
<comment type="catalytic activity">
    <reaction evidence="1">
        <text>S-sulfanyl-L-cysteinyl-[protein] + uridine(34) in tRNA + AH2 + ATP = 2-thiouridine(34) in tRNA + L-cysteinyl-[protein] + A + AMP + diphosphate + H(+)</text>
        <dbReference type="Rhea" id="RHEA:47032"/>
        <dbReference type="Rhea" id="RHEA-COMP:10131"/>
        <dbReference type="Rhea" id="RHEA-COMP:11726"/>
        <dbReference type="Rhea" id="RHEA-COMP:11727"/>
        <dbReference type="Rhea" id="RHEA-COMP:11728"/>
        <dbReference type="ChEBI" id="CHEBI:13193"/>
        <dbReference type="ChEBI" id="CHEBI:15378"/>
        <dbReference type="ChEBI" id="CHEBI:17499"/>
        <dbReference type="ChEBI" id="CHEBI:29950"/>
        <dbReference type="ChEBI" id="CHEBI:30616"/>
        <dbReference type="ChEBI" id="CHEBI:33019"/>
        <dbReference type="ChEBI" id="CHEBI:61963"/>
        <dbReference type="ChEBI" id="CHEBI:65315"/>
        <dbReference type="ChEBI" id="CHEBI:87170"/>
        <dbReference type="ChEBI" id="CHEBI:456215"/>
        <dbReference type="EC" id="2.8.1.13"/>
    </reaction>
</comment>
<comment type="subunit">
    <text evidence="1">Interacts with TusE.</text>
</comment>
<comment type="subcellular location">
    <subcellularLocation>
        <location evidence="1">Cytoplasm</location>
    </subcellularLocation>
</comment>
<comment type="similarity">
    <text evidence="1">Belongs to the MnmA/TRMU family.</text>
</comment>
<feature type="chain" id="PRO_0000121594" description="tRNA-specific 2-thiouridylase MnmA">
    <location>
        <begin position="1"/>
        <end position="368"/>
    </location>
</feature>
<feature type="region of interest" description="Interaction with target base in tRNA" evidence="1">
    <location>
        <begin position="97"/>
        <end position="99"/>
    </location>
</feature>
<feature type="region of interest" description="Interaction with tRNA" evidence="1">
    <location>
        <begin position="149"/>
        <end position="151"/>
    </location>
</feature>
<feature type="region of interest" description="Interaction with tRNA" evidence="1">
    <location>
        <begin position="311"/>
        <end position="312"/>
    </location>
</feature>
<feature type="active site" description="Nucleophile" evidence="1">
    <location>
        <position position="102"/>
    </location>
</feature>
<feature type="active site" description="Cysteine persulfide intermediate" evidence="1">
    <location>
        <position position="199"/>
    </location>
</feature>
<feature type="binding site" evidence="1">
    <location>
        <begin position="11"/>
        <end position="18"/>
    </location>
    <ligand>
        <name>ATP</name>
        <dbReference type="ChEBI" id="CHEBI:30616"/>
    </ligand>
</feature>
<feature type="binding site" evidence="1">
    <location>
        <position position="37"/>
    </location>
    <ligand>
        <name>ATP</name>
        <dbReference type="ChEBI" id="CHEBI:30616"/>
    </ligand>
</feature>
<feature type="binding site" evidence="1">
    <location>
        <position position="127"/>
    </location>
    <ligand>
        <name>ATP</name>
        <dbReference type="ChEBI" id="CHEBI:30616"/>
    </ligand>
</feature>
<feature type="site" description="Interaction with tRNA" evidence="1">
    <location>
        <position position="128"/>
    </location>
</feature>
<feature type="site" description="Interaction with tRNA" evidence="1">
    <location>
        <position position="344"/>
    </location>
</feature>
<feature type="disulfide bond" description="Alternate" evidence="1">
    <location>
        <begin position="102"/>
        <end position="199"/>
    </location>
</feature>
<dbReference type="EC" id="2.8.1.13" evidence="1"/>
<dbReference type="EMBL" id="AL513382">
    <property type="protein sequence ID" value="CAD08358.1"/>
    <property type="molecule type" value="Genomic_DNA"/>
</dbReference>
<dbReference type="EMBL" id="AE014613">
    <property type="protein sequence ID" value="AAO69311.1"/>
    <property type="molecule type" value="Genomic_DNA"/>
</dbReference>
<dbReference type="RefSeq" id="NP_455726.1">
    <property type="nucleotide sequence ID" value="NC_003198.1"/>
</dbReference>
<dbReference type="RefSeq" id="WP_000004540.1">
    <property type="nucleotide sequence ID" value="NZ_WSUR01000030.1"/>
</dbReference>
<dbReference type="SMR" id="Q8Z7G9"/>
<dbReference type="STRING" id="220341.gene:17585238"/>
<dbReference type="KEGG" id="stt:t1686"/>
<dbReference type="KEGG" id="sty:STY1274"/>
<dbReference type="PATRIC" id="fig|220341.7.peg.1279"/>
<dbReference type="eggNOG" id="COG0482">
    <property type="taxonomic scope" value="Bacteria"/>
</dbReference>
<dbReference type="HOGENOM" id="CLU_035188_1_0_6"/>
<dbReference type="OMA" id="PFYVWDL"/>
<dbReference type="OrthoDB" id="9800696at2"/>
<dbReference type="Proteomes" id="UP000000541">
    <property type="component" value="Chromosome"/>
</dbReference>
<dbReference type="Proteomes" id="UP000002670">
    <property type="component" value="Chromosome"/>
</dbReference>
<dbReference type="GO" id="GO:0005737">
    <property type="term" value="C:cytoplasm"/>
    <property type="evidence" value="ECO:0007669"/>
    <property type="project" value="UniProtKB-SubCell"/>
</dbReference>
<dbReference type="GO" id="GO:0005524">
    <property type="term" value="F:ATP binding"/>
    <property type="evidence" value="ECO:0007669"/>
    <property type="project" value="UniProtKB-KW"/>
</dbReference>
<dbReference type="GO" id="GO:0000049">
    <property type="term" value="F:tRNA binding"/>
    <property type="evidence" value="ECO:0007669"/>
    <property type="project" value="UniProtKB-KW"/>
</dbReference>
<dbReference type="GO" id="GO:0103016">
    <property type="term" value="F:tRNA-uridine 2-sulfurtransferase activity"/>
    <property type="evidence" value="ECO:0007669"/>
    <property type="project" value="UniProtKB-EC"/>
</dbReference>
<dbReference type="GO" id="GO:0002143">
    <property type="term" value="P:tRNA wobble position uridine thiolation"/>
    <property type="evidence" value="ECO:0007669"/>
    <property type="project" value="TreeGrafter"/>
</dbReference>
<dbReference type="CDD" id="cd01998">
    <property type="entry name" value="MnmA_TRMU-like"/>
    <property type="match status" value="1"/>
</dbReference>
<dbReference type="FunFam" id="2.30.30.280:FF:000001">
    <property type="entry name" value="tRNA-specific 2-thiouridylase MnmA"/>
    <property type="match status" value="1"/>
</dbReference>
<dbReference type="FunFam" id="2.40.30.10:FF:000023">
    <property type="entry name" value="tRNA-specific 2-thiouridylase MnmA"/>
    <property type="match status" value="1"/>
</dbReference>
<dbReference type="FunFam" id="3.40.50.620:FF:000004">
    <property type="entry name" value="tRNA-specific 2-thiouridylase MnmA"/>
    <property type="match status" value="1"/>
</dbReference>
<dbReference type="Gene3D" id="2.30.30.280">
    <property type="entry name" value="Adenine nucleotide alpha hydrolases-like domains"/>
    <property type="match status" value="1"/>
</dbReference>
<dbReference type="Gene3D" id="3.40.50.620">
    <property type="entry name" value="HUPs"/>
    <property type="match status" value="1"/>
</dbReference>
<dbReference type="Gene3D" id="2.40.30.10">
    <property type="entry name" value="Translation factors"/>
    <property type="match status" value="1"/>
</dbReference>
<dbReference type="HAMAP" id="MF_00144">
    <property type="entry name" value="tRNA_thiouridyl_MnmA"/>
    <property type="match status" value="1"/>
</dbReference>
<dbReference type="InterPro" id="IPR004506">
    <property type="entry name" value="MnmA-like"/>
</dbReference>
<dbReference type="InterPro" id="IPR046885">
    <property type="entry name" value="MnmA-like_C"/>
</dbReference>
<dbReference type="InterPro" id="IPR046884">
    <property type="entry name" value="MnmA-like_central"/>
</dbReference>
<dbReference type="InterPro" id="IPR023382">
    <property type="entry name" value="MnmA-like_central_sf"/>
</dbReference>
<dbReference type="InterPro" id="IPR014729">
    <property type="entry name" value="Rossmann-like_a/b/a_fold"/>
</dbReference>
<dbReference type="NCBIfam" id="NF001138">
    <property type="entry name" value="PRK00143.1"/>
    <property type="match status" value="1"/>
</dbReference>
<dbReference type="NCBIfam" id="TIGR00420">
    <property type="entry name" value="trmU"/>
    <property type="match status" value="1"/>
</dbReference>
<dbReference type="PANTHER" id="PTHR11933:SF5">
    <property type="entry name" value="MITOCHONDRIAL TRNA-SPECIFIC 2-THIOURIDYLASE 1"/>
    <property type="match status" value="1"/>
</dbReference>
<dbReference type="PANTHER" id="PTHR11933">
    <property type="entry name" value="TRNA 5-METHYLAMINOMETHYL-2-THIOURIDYLATE -METHYLTRANSFERASE"/>
    <property type="match status" value="1"/>
</dbReference>
<dbReference type="Pfam" id="PF03054">
    <property type="entry name" value="tRNA_Me_trans"/>
    <property type="match status" value="1"/>
</dbReference>
<dbReference type="Pfam" id="PF20258">
    <property type="entry name" value="tRNA_Me_trans_C"/>
    <property type="match status" value="1"/>
</dbReference>
<dbReference type="Pfam" id="PF20259">
    <property type="entry name" value="tRNA_Me_trans_M"/>
    <property type="match status" value="1"/>
</dbReference>
<dbReference type="SUPFAM" id="SSF52402">
    <property type="entry name" value="Adenine nucleotide alpha hydrolases-like"/>
    <property type="match status" value="1"/>
</dbReference>
<proteinExistence type="inferred from homology"/>
<evidence type="ECO:0000255" key="1">
    <source>
        <dbReference type="HAMAP-Rule" id="MF_00144"/>
    </source>
</evidence>
<sequence length="368" mass="40871">MSESPKKVIVGMSGGVDSSVSAWLLQQQGYQVEGLFMKNWEEDDGEEYCTAAADLADAQAVCDKLGIELHTVNFAAEYWDNVFELFLEEYKAGRTPNPDILCNKEIKFKAFLEFAAEDLGADYIATGHYVRRADVNGKSRLLRGLDGNKDQSYFLYTLGHEQIAQSLFPVGELEKPQVRKIAEDLGLVTAKKKDSTGICFIGERKFRDFLGRYLPAQPGKIITVDGDEIGEHQGLMYHTLGQRKGLGIGGTKDGSEDPWYVVDKDVENNVLIVAQGHEHPRLMSVGLIAQQLHWVDREPFTGTLRCTVKTRYRQTDIPCTINALDDDRIEVIFDEPVAAVTPGQSAVFYSGEVCLGGGIIEQRLPLTV</sequence>
<reference key="1">
    <citation type="journal article" date="2001" name="Nature">
        <title>Complete genome sequence of a multiple drug resistant Salmonella enterica serovar Typhi CT18.</title>
        <authorList>
            <person name="Parkhill J."/>
            <person name="Dougan G."/>
            <person name="James K.D."/>
            <person name="Thomson N.R."/>
            <person name="Pickard D."/>
            <person name="Wain J."/>
            <person name="Churcher C.M."/>
            <person name="Mungall K.L."/>
            <person name="Bentley S.D."/>
            <person name="Holden M.T.G."/>
            <person name="Sebaihia M."/>
            <person name="Baker S."/>
            <person name="Basham D."/>
            <person name="Brooks K."/>
            <person name="Chillingworth T."/>
            <person name="Connerton P."/>
            <person name="Cronin A."/>
            <person name="Davis P."/>
            <person name="Davies R.M."/>
            <person name="Dowd L."/>
            <person name="White N."/>
            <person name="Farrar J."/>
            <person name="Feltwell T."/>
            <person name="Hamlin N."/>
            <person name="Haque A."/>
            <person name="Hien T.T."/>
            <person name="Holroyd S."/>
            <person name="Jagels K."/>
            <person name="Krogh A."/>
            <person name="Larsen T.S."/>
            <person name="Leather S."/>
            <person name="Moule S."/>
            <person name="O'Gaora P."/>
            <person name="Parry C."/>
            <person name="Quail M.A."/>
            <person name="Rutherford K.M."/>
            <person name="Simmonds M."/>
            <person name="Skelton J."/>
            <person name="Stevens K."/>
            <person name="Whitehead S."/>
            <person name="Barrell B.G."/>
        </authorList>
    </citation>
    <scope>NUCLEOTIDE SEQUENCE [LARGE SCALE GENOMIC DNA]</scope>
    <source>
        <strain>CT18</strain>
    </source>
</reference>
<reference key="2">
    <citation type="journal article" date="2003" name="J. Bacteriol.">
        <title>Comparative genomics of Salmonella enterica serovar Typhi strains Ty2 and CT18.</title>
        <authorList>
            <person name="Deng W."/>
            <person name="Liou S.-R."/>
            <person name="Plunkett G. III"/>
            <person name="Mayhew G.F."/>
            <person name="Rose D.J."/>
            <person name="Burland V."/>
            <person name="Kodoyianni V."/>
            <person name="Schwartz D.C."/>
            <person name="Blattner F.R."/>
        </authorList>
    </citation>
    <scope>NUCLEOTIDE SEQUENCE [LARGE SCALE GENOMIC DNA]</scope>
    <source>
        <strain>ATCC 700931 / Ty2</strain>
    </source>
</reference>
<gene>
    <name evidence="1" type="primary">mnmA</name>
    <name type="synonym">trmU</name>
    <name type="ordered locus">STY1274</name>
    <name type="ordered locus">t1686</name>
</gene>
<keyword id="KW-0067">ATP-binding</keyword>
<keyword id="KW-0963">Cytoplasm</keyword>
<keyword id="KW-1015">Disulfide bond</keyword>
<keyword id="KW-0547">Nucleotide-binding</keyword>
<keyword id="KW-0694">RNA-binding</keyword>
<keyword id="KW-0808">Transferase</keyword>
<keyword id="KW-0819">tRNA processing</keyword>
<keyword id="KW-0820">tRNA-binding</keyword>
<organism>
    <name type="scientific">Salmonella typhi</name>
    <dbReference type="NCBI Taxonomy" id="90370"/>
    <lineage>
        <taxon>Bacteria</taxon>
        <taxon>Pseudomonadati</taxon>
        <taxon>Pseudomonadota</taxon>
        <taxon>Gammaproteobacteria</taxon>
        <taxon>Enterobacterales</taxon>
        <taxon>Enterobacteriaceae</taxon>
        <taxon>Salmonella</taxon>
    </lineage>
</organism>
<accession>Q8Z7G9</accession>
<name>MNMA_SALTI</name>
<protein>
    <recommendedName>
        <fullName evidence="1">tRNA-specific 2-thiouridylase MnmA</fullName>
        <ecNumber evidence="1">2.8.1.13</ecNumber>
    </recommendedName>
</protein>